<organism>
    <name type="scientific">Haemophilus ducreyi (strain 35000HP / ATCC 700724)</name>
    <dbReference type="NCBI Taxonomy" id="233412"/>
    <lineage>
        <taxon>Bacteria</taxon>
        <taxon>Pseudomonadati</taxon>
        <taxon>Pseudomonadota</taxon>
        <taxon>Gammaproteobacteria</taxon>
        <taxon>Pasteurellales</taxon>
        <taxon>Pasteurellaceae</taxon>
        <taxon>Haemophilus</taxon>
    </lineage>
</organism>
<proteinExistence type="inferred from homology"/>
<dbReference type="EC" id="2.1.1.170" evidence="1"/>
<dbReference type="EMBL" id="AE017143">
    <property type="protein sequence ID" value="AAP95026.1"/>
    <property type="molecule type" value="Genomic_DNA"/>
</dbReference>
<dbReference type="RefSeq" id="WP_010944080.1">
    <property type="nucleotide sequence ID" value="NC_002940.2"/>
</dbReference>
<dbReference type="SMR" id="Q7VPP8"/>
<dbReference type="STRING" id="233412.HD_0002"/>
<dbReference type="KEGG" id="hdu:HD_0002"/>
<dbReference type="eggNOG" id="COG0357">
    <property type="taxonomic scope" value="Bacteria"/>
</dbReference>
<dbReference type="HOGENOM" id="CLU_065341_2_2_6"/>
<dbReference type="OrthoDB" id="9808773at2"/>
<dbReference type="Proteomes" id="UP000001022">
    <property type="component" value="Chromosome"/>
</dbReference>
<dbReference type="GO" id="GO:0005829">
    <property type="term" value="C:cytosol"/>
    <property type="evidence" value="ECO:0007669"/>
    <property type="project" value="TreeGrafter"/>
</dbReference>
<dbReference type="GO" id="GO:0070043">
    <property type="term" value="F:rRNA (guanine-N7-)-methyltransferase activity"/>
    <property type="evidence" value="ECO:0007669"/>
    <property type="project" value="UniProtKB-UniRule"/>
</dbReference>
<dbReference type="CDD" id="cd02440">
    <property type="entry name" value="AdoMet_MTases"/>
    <property type="match status" value="1"/>
</dbReference>
<dbReference type="Gene3D" id="3.40.50.150">
    <property type="entry name" value="Vaccinia Virus protein VP39"/>
    <property type="match status" value="1"/>
</dbReference>
<dbReference type="HAMAP" id="MF_00074">
    <property type="entry name" value="16SrRNA_methyltr_G"/>
    <property type="match status" value="1"/>
</dbReference>
<dbReference type="InterPro" id="IPR003682">
    <property type="entry name" value="rRNA_ssu_MeTfrase_G"/>
</dbReference>
<dbReference type="InterPro" id="IPR029063">
    <property type="entry name" value="SAM-dependent_MTases_sf"/>
</dbReference>
<dbReference type="NCBIfam" id="TIGR00138">
    <property type="entry name" value="rsmG_gidB"/>
    <property type="match status" value="1"/>
</dbReference>
<dbReference type="PANTHER" id="PTHR31760">
    <property type="entry name" value="S-ADENOSYL-L-METHIONINE-DEPENDENT METHYLTRANSFERASES SUPERFAMILY PROTEIN"/>
    <property type="match status" value="1"/>
</dbReference>
<dbReference type="PANTHER" id="PTHR31760:SF0">
    <property type="entry name" value="S-ADENOSYL-L-METHIONINE-DEPENDENT METHYLTRANSFERASES SUPERFAMILY PROTEIN"/>
    <property type="match status" value="1"/>
</dbReference>
<dbReference type="Pfam" id="PF02527">
    <property type="entry name" value="GidB"/>
    <property type="match status" value="1"/>
</dbReference>
<dbReference type="PIRSF" id="PIRSF003078">
    <property type="entry name" value="GidB"/>
    <property type="match status" value="1"/>
</dbReference>
<dbReference type="SUPFAM" id="SSF53335">
    <property type="entry name" value="S-adenosyl-L-methionine-dependent methyltransferases"/>
    <property type="match status" value="1"/>
</dbReference>
<feature type="chain" id="PRO_0000184258" description="Ribosomal RNA small subunit methyltransferase G">
    <location>
        <begin position="1"/>
        <end position="203"/>
    </location>
</feature>
<feature type="binding site" evidence="1">
    <location>
        <position position="73"/>
    </location>
    <ligand>
        <name>S-adenosyl-L-methionine</name>
        <dbReference type="ChEBI" id="CHEBI:59789"/>
    </ligand>
</feature>
<feature type="binding site" evidence="1">
    <location>
        <position position="78"/>
    </location>
    <ligand>
        <name>S-adenosyl-L-methionine</name>
        <dbReference type="ChEBI" id="CHEBI:59789"/>
    </ligand>
</feature>
<feature type="binding site" evidence="1">
    <location>
        <begin position="124"/>
        <end position="125"/>
    </location>
    <ligand>
        <name>S-adenosyl-L-methionine</name>
        <dbReference type="ChEBI" id="CHEBI:59789"/>
    </ligand>
</feature>
<feature type="binding site" evidence="1">
    <location>
        <position position="138"/>
    </location>
    <ligand>
        <name>S-adenosyl-L-methionine</name>
        <dbReference type="ChEBI" id="CHEBI:59789"/>
    </ligand>
</feature>
<name>RSMG_HAEDU</name>
<accession>Q7VPP8</accession>
<comment type="function">
    <text evidence="1">Specifically methylates the N7 position of guanine in position 527 of 16S rRNA.</text>
</comment>
<comment type="catalytic activity">
    <reaction evidence="1">
        <text>guanosine(527) in 16S rRNA + S-adenosyl-L-methionine = N(7)-methylguanosine(527) in 16S rRNA + S-adenosyl-L-homocysteine</text>
        <dbReference type="Rhea" id="RHEA:42732"/>
        <dbReference type="Rhea" id="RHEA-COMP:10209"/>
        <dbReference type="Rhea" id="RHEA-COMP:10210"/>
        <dbReference type="ChEBI" id="CHEBI:57856"/>
        <dbReference type="ChEBI" id="CHEBI:59789"/>
        <dbReference type="ChEBI" id="CHEBI:74269"/>
        <dbReference type="ChEBI" id="CHEBI:74480"/>
        <dbReference type="EC" id="2.1.1.170"/>
    </reaction>
</comment>
<comment type="subcellular location">
    <subcellularLocation>
        <location evidence="1">Cytoplasm</location>
    </subcellularLocation>
</comment>
<comment type="similarity">
    <text evidence="1">Belongs to the methyltransferase superfamily. RNA methyltransferase RsmG family.</text>
</comment>
<sequence>MKQKLDRLLVQADIQLTERQKEQLIGFVHLLHKWNKAYNLTSVRDPEEMLVKHIMDSLVVSVHLQGQSFIDVGTGPGLPGIPLAIANPDKQFVLLDSLGKRITFIKQVLRELAITNVTPVLSRVEQYTARQFDGVLSRAFASLDDMLNWCYALPNDSGKFYALKGVYDGTELQAVQKPIKLVDAIKLNVPQLVGERHLIVLAK</sequence>
<keyword id="KW-0963">Cytoplasm</keyword>
<keyword id="KW-0489">Methyltransferase</keyword>
<keyword id="KW-1185">Reference proteome</keyword>
<keyword id="KW-0698">rRNA processing</keyword>
<keyword id="KW-0949">S-adenosyl-L-methionine</keyword>
<keyword id="KW-0808">Transferase</keyword>
<gene>
    <name evidence="1" type="primary">rsmG</name>
    <name type="ordered locus">HD_0002</name>
</gene>
<evidence type="ECO:0000255" key="1">
    <source>
        <dbReference type="HAMAP-Rule" id="MF_00074"/>
    </source>
</evidence>
<reference key="1">
    <citation type="submission" date="2003-06" db="EMBL/GenBank/DDBJ databases">
        <title>The complete genome sequence of Haemophilus ducreyi.</title>
        <authorList>
            <person name="Munson R.S. Jr."/>
            <person name="Ray W.C."/>
            <person name="Mahairas G."/>
            <person name="Sabo P."/>
            <person name="Mungur R."/>
            <person name="Johnson L."/>
            <person name="Nguyen D."/>
            <person name="Wang J."/>
            <person name="Forst C."/>
            <person name="Hood L."/>
        </authorList>
    </citation>
    <scope>NUCLEOTIDE SEQUENCE [LARGE SCALE GENOMIC DNA]</scope>
    <source>
        <strain>35000HP / ATCC 700724</strain>
    </source>
</reference>
<protein>
    <recommendedName>
        <fullName evidence="1">Ribosomal RNA small subunit methyltransferase G</fullName>
        <ecNumber evidence="1">2.1.1.170</ecNumber>
    </recommendedName>
    <alternativeName>
        <fullName evidence="1">16S rRNA 7-methylguanosine methyltransferase</fullName>
        <shortName evidence="1">16S rRNA m7G methyltransferase</shortName>
    </alternativeName>
</protein>